<sequence>MAAKDVKFGRSAREKMLRGVDILADAVKVTLGPKGRNVVIDKSFGAPRITKDGVSVAKEIELEDKFENMGAQMLREVASKTNDTAGDGTTTATVLGQAIVQEGAKAVAAGMNPMDLKRGIDLAVTEVVAELLGKAKKINTSEEVAQVGTISANGEAEIGKMIADAMQKVGNEGVITVEEAKTAETELEVVEGMQFDRGYLSPYFVTNPEKMVADLEDAYILLHEKKLSNLQALLPVLEAVVQTSKPLVIIAEDVEGEALATLVVNKLRGGLKIAAVKAPGFGDRRKAMLEDIAILTGGQVISEDLGIKLETVTLDMLGRAKKVSISKENTTIVDGAGQKAEIDARVSQIKQQIEETSSDYDREKLQERLAKLAGGVAVIRVGGATEVEVKEKKDRVDDALNATRAAVEEGIVAGGGTALLRASAKISAKGINADQEAGINIVRRALQAPARQITTNAGEEASVIVGKILENASETYGYNTANGEFGDLIKAGVVDPVKVVRTALQNAASVAGLLITTEAMIAELPKKDAAPAGMPGGMGGMGGMDF</sequence>
<protein>
    <recommendedName>
        <fullName evidence="1">Chaperonin GroEL</fullName>
        <ecNumber evidence="1">5.6.1.7</ecNumber>
    </recommendedName>
    <alternativeName>
        <fullName evidence="1">60 kDa chaperonin</fullName>
    </alternativeName>
    <alternativeName>
        <fullName evidence="1">Chaperonin-60</fullName>
        <shortName evidence="1">Cpn60</shortName>
    </alternativeName>
</protein>
<name>CH60_BRUA4</name>
<dbReference type="EC" id="5.6.1.7" evidence="1"/>
<dbReference type="EMBL" id="CP000759">
    <property type="protein sequence ID" value="ABS15734.1"/>
    <property type="molecule type" value="Genomic_DNA"/>
</dbReference>
<dbReference type="RefSeq" id="WP_010660991.1">
    <property type="nucleotide sequence ID" value="NC_009668.1"/>
</dbReference>
<dbReference type="SMR" id="A6X3D0"/>
<dbReference type="STRING" id="439375.Oant_3026"/>
<dbReference type="GeneID" id="61315721"/>
<dbReference type="KEGG" id="oan:Oant_3026"/>
<dbReference type="eggNOG" id="COG0459">
    <property type="taxonomic scope" value="Bacteria"/>
</dbReference>
<dbReference type="HOGENOM" id="CLU_016503_3_0_5"/>
<dbReference type="PhylomeDB" id="A6X3D0"/>
<dbReference type="Proteomes" id="UP000002301">
    <property type="component" value="Chromosome 2"/>
</dbReference>
<dbReference type="GO" id="GO:0005737">
    <property type="term" value="C:cytoplasm"/>
    <property type="evidence" value="ECO:0007669"/>
    <property type="project" value="UniProtKB-SubCell"/>
</dbReference>
<dbReference type="GO" id="GO:0005524">
    <property type="term" value="F:ATP binding"/>
    <property type="evidence" value="ECO:0007669"/>
    <property type="project" value="UniProtKB-UniRule"/>
</dbReference>
<dbReference type="GO" id="GO:0140662">
    <property type="term" value="F:ATP-dependent protein folding chaperone"/>
    <property type="evidence" value="ECO:0007669"/>
    <property type="project" value="InterPro"/>
</dbReference>
<dbReference type="GO" id="GO:0016853">
    <property type="term" value="F:isomerase activity"/>
    <property type="evidence" value="ECO:0007669"/>
    <property type="project" value="UniProtKB-KW"/>
</dbReference>
<dbReference type="GO" id="GO:0051082">
    <property type="term" value="F:unfolded protein binding"/>
    <property type="evidence" value="ECO:0007669"/>
    <property type="project" value="UniProtKB-UniRule"/>
</dbReference>
<dbReference type="GO" id="GO:0042026">
    <property type="term" value="P:protein refolding"/>
    <property type="evidence" value="ECO:0007669"/>
    <property type="project" value="UniProtKB-UniRule"/>
</dbReference>
<dbReference type="CDD" id="cd03344">
    <property type="entry name" value="GroEL"/>
    <property type="match status" value="1"/>
</dbReference>
<dbReference type="FunFam" id="1.10.560.10:FF:000001">
    <property type="entry name" value="60 kDa chaperonin"/>
    <property type="match status" value="1"/>
</dbReference>
<dbReference type="FunFam" id="3.50.7.10:FF:000001">
    <property type="entry name" value="60 kDa chaperonin"/>
    <property type="match status" value="1"/>
</dbReference>
<dbReference type="Gene3D" id="3.50.7.10">
    <property type="entry name" value="GroEL"/>
    <property type="match status" value="1"/>
</dbReference>
<dbReference type="Gene3D" id="1.10.560.10">
    <property type="entry name" value="GroEL-like equatorial domain"/>
    <property type="match status" value="1"/>
</dbReference>
<dbReference type="Gene3D" id="3.30.260.10">
    <property type="entry name" value="TCP-1-like chaperonin intermediate domain"/>
    <property type="match status" value="1"/>
</dbReference>
<dbReference type="HAMAP" id="MF_00600">
    <property type="entry name" value="CH60"/>
    <property type="match status" value="1"/>
</dbReference>
<dbReference type="InterPro" id="IPR018370">
    <property type="entry name" value="Chaperonin_Cpn60_CS"/>
</dbReference>
<dbReference type="InterPro" id="IPR001844">
    <property type="entry name" value="Cpn60/GroEL"/>
</dbReference>
<dbReference type="InterPro" id="IPR002423">
    <property type="entry name" value="Cpn60/GroEL/TCP-1"/>
</dbReference>
<dbReference type="InterPro" id="IPR027409">
    <property type="entry name" value="GroEL-like_apical_dom_sf"/>
</dbReference>
<dbReference type="InterPro" id="IPR027413">
    <property type="entry name" value="GROEL-like_equatorial_sf"/>
</dbReference>
<dbReference type="InterPro" id="IPR027410">
    <property type="entry name" value="TCP-1-like_intermed_sf"/>
</dbReference>
<dbReference type="NCBIfam" id="TIGR02348">
    <property type="entry name" value="GroEL"/>
    <property type="match status" value="1"/>
</dbReference>
<dbReference type="NCBIfam" id="NF000592">
    <property type="entry name" value="PRK00013.1"/>
    <property type="match status" value="1"/>
</dbReference>
<dbReference type="NCBIfam" id="NF009487">
    <property type="entry name" value="PRK12849.1"/>
    <property type="match status" value="1"/>
</dbReference>
<dbReference type="NCBIfam" id="NF009488">
    <property type="entry name" value="PRK12850.1"/>
    <property type="match status" value="1"/>
</dbReference>
<dbReference type="NCBIfam" id="NF009489">
    <property type="entry name" value="PRK12851.1"/>
    <property type="match status" value="1"/>
</dbReference>
<dbReference type="PANTHER" id="PTHR45633">
    <property type="entry name" value="60 KDA HEAT SHOCK PROTEIN, MITOCHONDRIAL"/>
    <property type="match status" value="1"/>
</dbReference>
<dbReference type="Pfam" id="PF00118">
    <property type="entry name" value="Cpn60_TCP1"/>
    <property type="match status" value="1"/>
</dbReference>
<dbReference type="PRINTS" id="PR00298">
    <property type="entry name" value="CHAPERONIN60"/>
</dbReference>
<dbReference type="SUPFAM" id="SSF52029">
    <property type="entry name" value="GroEL apical domain-like"/>
    <property type="match status" value="1"/>
</dbReference>
<dbReference type="SUPFAM" id="SSF48592">
    <property type="entry name" value="GroEL equatorial domain-like"/>
    <property type="match status" value="1"/>
</dbReference>
<dbReference type="SUPFAM" id="SSF54849">
    <property type="entry name" value="GroEL-intermediate domain like"/>
    <property type="match status" value="1"/>
</dbReference>
<dbReference type="PROSITE" id="PS00296">
    <property type="entry name" value="CHAPERONINS_CPN60"/>
    <property type="match status" value="1"/>
</dbReference>
<reference key="1">
    <citation type="journal article" date="2011" name="J. Bacteriol.">
        <title>Genome of Ochrobactrum anthropi ATCC 49188 T, a versatile opportunistic pathogen and symbiont of several eukaryotic hosts.</title>
        <authorList>
            <person name="Chain P.S."/>
            <person name="Lang D.M."/>
            <person name="Comerci D.J."/>
            <person name="Malfatti S.A."/>
            <person name="Vergez L.M."/>
            <person name="Shin M."/>
            <person name="Ugalde R.A."/>
            <person name="Garcia E."/>
            <person name="Tolmasky M.E."/>
        </authorList>
    </citation>
    <scope>NUCLEOTIDE SEQUENCE [LARGE SCALE GENOMIC DNA]</scope>
    <source>
        <strain>ATCC 49188 / DSM 6882 / CCUG 24695 / JCM 21032 / LMG 3331 / NBRC 15819 / NCTC 12168 / Alc 37</strain>
    </source>
</reference>
<keyword id="KW-0067">ATP-binding</keyword>
<keyword id="KW-0143">Chaperone</keyword>
<keyword id="KW-0963">Cytoplasm</keyword>
<keyword id="KW-0413">Isomerase</keyword>
<keyword id="KW-0547">Nucleotide-binding</keyword>
<keyword id="KW-1185">Reference proteome</keyword>
<feature type="chain" id="PRO_1000025812" description="Chaperonin GroEL">
    <location>
        <begin position="1"/>
        <end position="546"/>
    </location>
</feature>
<feature type="binding site" evidence="1">
    <location>
        <begin position="30"/>
        <end position="33"/>
    </location>
    <ligand>
        <name>ATP</name>
        <dbReference type="ChEBI" id="CHEBI:30616"/>
    </ligand>
</feature>
<feature type="binding site" evidence="1">
    <location>
        <position position="51"/>
    </location>
    <ligand>
        <name>ATP</name>
        <dbReference type="ChEBI" id="CHEBI:30616"/>
    </ligand>
</feature>
<feature type="binding site" evidence="1">
    <location>
        <begin position="87"/>
        <end position="91"/>
    </location>
    <ligand>
        <name>ATP</name>
        <dbReference type="ChEBI" id="CHEBI:30616"/>
    </ligand>
</feature>
<feature type="binding site" evidence="1">
    <location>
        <position position="415"/>
    </location>
    <ligand>
        <name>ATP</name>
        <dbReference type="ChEBI" id="CHEBI:30616"/>
    </ligand>
</feature>
<feature type="binding site" evidence="1">
    <location>
        <position position="495"/>
    </location>
    <ligand>
        <name>ATP</name>
        <dbReference type="ChEBI" id="CHEBI:30616"/>
    </ligand>
</feature>
<comment type="function">
    <text evidence="1">Together with its co-chaperonin GroES, plays an essential role in assisting protein folding. The GroEL-GroES system forms a nano-cage that allows encapsulation of the non-native substrate proteins and provides a physical environment optimized to promote and accelerate protein folding.</text>
</comment>
<comment type="catalytic activity">
    <reaction evidence="1">
        <text>ATP + H2O + a folded polypeptide = ADP + phosphate + an unfolded polypeptide.</text>
        <dbReference type="EC" id="5.6.1.7"/>
    </reaction>
</comment>
<comment type="subunit">
    <text evidence="1">Forms a cylinder of 14 subunits composed of two heptameric rings stacked back-to-back. Interacts with the co-chaperonin GroES.</text>
</comment>
<comment type="subcellular location">
    <subcellularLocation>
        <location evidence="1">Cytoplasm</location>
    </subcellularLocation>
</comment>
<comment type="similarity">
    <text evidence="1">Belongs to the chaperonin (HSP60) family.</text>
</comment>
<gene>
    <name evidence="1" type="primary">groEL</name>
    <name evidence="1" type="synonym">groL</name>
    <name type="ordered locus">Oant_3026</name>
</gene>
<accession>A6X3D0</accession>
<organism>
    <name type="scientific">Brucella anthropi (strain ATCC 49188 / DSM 6882 / CCUG 24695 / JCM 21032 / LMG 3331 / NBRC 15819 / NCTC 12168 / Alc 37)</name>
    <name type="common">Ochrobactrum anthropi</name>
    <dbReference type="NCBI Taxonomy" id="439375"/>
    <lineage>
        <taxon>Bacteria</taxon>
        <taxon>Pseudomonadati</taxon>
        <taxon>Pseudomonadota</taxon>
        <taxon>Alphaproteobacteria</taxon>
        <taxon>Hyphomicrobiales</taxon>
        <taxon>Brucellaceae</taxon>
        <taxon>Brucella/Ochrobactrum group</taxon>
        <taxon>Brucella</taxon>
    </lineage>
</organism>
<evidence type="ECO:0000255" key="1">
    <source>
        <dbReference type="HAMAP-Rule" id="MF_00600"/>
    </source>
</evidence>
<proteinExistence type="inferred from homology"/>